<accession>P50282</accession>
<keyword id="KW-0106">Calcium</keyword>
<keyword id="KW-0177">Collagen degradation</keyword>
<keyword id="KW-1015">Disulfide bond</keyword>
<keyword id="KW-0272">Extracellular matrix</keyword>
<keyword id="KW-0325">Glycoprotein</keyword>
<keyword id="KW-0378">Hydrolase</keyword>
<keyword id="KW-0479">Metal-binding</keyword>
<keyword id="KW-0482">Metalloprotease</keyword>
<keyword id="KW-0645">Protease</keyword>
<keyword id="KW-1185">Reference proteome</keyword>
<keyword id="KW-0677">Repeat</keyword>
<keyword id="KW-0964">Secreted</keyword>
<keyword id="KW-0732">Signal</keyword>
<keyword id="KW-0862">Zinc</keyword>
<keyword id="KW-0865">Zymogen</keyword>
<dbReference type="EC" id="3.4.24.35" evidence="1"/>
<dbReference type="EMBL" id="U24441">
    <property type="protein sequence ID" value="AAA90911.1"/>
    <property type="molecule type" value="mRNA"/>
</dbReference>
<dbReference type="EMBL" id="U36476">
    <property type="protein sequence ID" value="AAB01721.1"/>
    <property type="molecule type" value="mRNA"/>
</dbReference>
<dbReference type="PIR" id="JC4364">
    <property type="entry name" value="JC4364"/>
</dbReference>
<dbReference type="PIR" id="S62907">
    <property type="entry name" value="S62907"/>
</dbReference>
<dbReference type="RefSeq" id="NP_112317.1">
    <property type="nucleotide sequence ID" value="NM_031055.1"/>
</dbReference>
<dbReference type="SMR" id="P50282"/>
<dbReference type="FunCoup" id="P50282">
    <property type="interactions" value="277"/>
</dbReference>
<dbReference type="STRING" id="10116.ENSRNOP00000023965"/>
<dbReference type="BindingDB" id="P50282"/>
<dbReference type="ChEMBL" id="CHEMBL3870"/>
<dbReference type="MEROPS" id="M10.004"/>
<dbReference type="GlyCosmos" id="P50282">
    <property type="glycosylation" value="2 sites, No reported glycans"/>
</dbReference>
<dbReference type="GlyGen" id="P50282">
    <property type="glycosylation" value="5 sites"/>
</dbReference>
<dbReference type="PhosphoSitePlus" id="P50282"/>
<dbReference type="PaxDb" id="10116-ENSRNOP00000023965"/>
<dbReference type="ABCD" id="P50282">
    <property type="antibodies" value="2 sequenced antibodies"/>
</dbReference>
<dbReference type="GeneID" id="81687"/>
<dbReference type="KEGG" id="rno:81687"/>
<dbReference type="AGR" id="RGD:621320"/>
<dbReference type="CTD" id="4318"/>
<dbReference type="RGD" id="621320">
    <property type="gene designation" value="Mmp9"/>
</dbReference>
<dbReference type="eggNOG" id="KOG1565">
    <property type="taxonomic scope" value="Eukaryota"/>
</dbReference>
<dbReference type="InParanoid" id="P50282"/>
<dbReference type="PhylomeDB" id="P50282"/>
<dbReference type="BRENDA" id="3.4.24.35">
    <property type="organism ID" value="5301"/>
</dbReference>
<dbReference type="Reactome" id="R-RNO-1433557">
    <property type="pathway name" value="Signaling by SCF-KIT"/>
</dbReference>
<dbReference type="Reactome" id="R-RNO-1442490">
    <property type="pathway name" value="Collagen degradation"/>
</dbReference>
<dbReference type="Reactome" id="R-RNO-1474228">
    <property type="pathway name" value="Degradation of the extracellular matrix"/>
</dbReference>
<dbReference type="Reactome" id="R-RNO-1592389">
    <property type="pathway name" value="Activation of Matrix Metalloproteinases"/>
</dbReference>
<dbReference type="Reactome" id="R-RNO-2022090">
    <property type="pathway name" value="Assembly of collagen fibrils and other multimeric structures"/>
</dbReference>
<dbReference type="Reactome" id="R-RNO-3928665">
    <property type="pathway name" value="EPH-ephrin mediated repulsion of cells"/>
</dbReference>
<dbReference type="Reactome" id="R-RNO-6798695">
    <property type="pathway name" value="Neutrophil degranulation"/>
</dbReference>
<dbReference type="Reactome" id="R-RNO-9009391">
    <property type="pathway name" value="Extra-nuclear estrogen signaling"/>
</dbReference>
<dbReference type="PRO" id="PR:P50282"/>
<dbReference type="Proteomes" id="UP000002494">
    <property type="component" value="Unplaced"/>
</dbReference>
<dbReference type="GO" id="GO:0098965">
    <property type="term" value="C:extracellular matrix of synaptic cleft"/>
    <property type="evidence" value="ECO:0000314"/>
    <property type="project" value="SynGO"/>
</dbReference>
<dbReference type="GO" id="GO:0005615">
    <property type="term" value="C:extracellular space"/>
    <property type="evidence" value="ECO:0000314"/>
    <property type="project" value="RGD"/>
</dbReference>
<dbReference type="GO" id="GO:0098978">
    <property type="term" value="C:glutamatergic synapse"/>
    <property type="evidence" value="ECO:0000314"/>
    <property type="project" value="SynGO"/>
</dbReference>
<dbReference type="GO" id="GO:0099092">
    <property type="term" value="C:postsynaptic density, intracellular component"/>
    <property type="evidence" value="ECO:0000314"/>
    <property type="project" value="SynGO"/>
</dbReference>
<dbReference type="GO" id="GO:0032991">
    <property type="term" value="C:protein-containing complex"/>
    <property type="evidence" value="ECO:0000314"/>
    <property type="project" value="RGD"/>
</dbReference>
<dbReference type="GO" id="GO:0098685">
    <property type="term" value="C:Schaffer collateral - CA1 synapse"/>
    <property type="evidence" value="ECO:0000314"/>
    <property type="project" value="SynGO"/>
</dbReference>
<dbReference type="GO" id="GO:0004175">
    <property type="term" value="F:endopeptidase activity"/>
    <property type="evidence" value="ECO:0000266"/>
    <property type="project" value="RGD"/>
</dbReference>
<dbReference type="GO" id="GO:0001968">
    <property type="term" value="F:fibronectin binding"/>
    <property type="evidence" value="ECO:0000353"/>
    <property type="project" value="RGD"/>
</dbReference>
<dbReference type="GO" id="GO:0042802">
    <property type="term" value="F:identical protein binding"/>
    <property type="evidence" value="ECO:0000266"/>
    <property type="project" value="RGD"/>
</dbReference>
<dbReference type="GO" id="GO:0004222">
    <property type="term" value="F:metalloendopeptidase activity"/>
    <property type="evidence" value="ECO:0000250"/>
    <property type="project" value="UniProtKB"/>
</dbReference>
<dbReference type="GO" id="GO:0008237">
    <property type="term" value="F:metallopeptidase activity"/>
    <property type="evidence" value="ECO:0000314"/>
    <property type="project" value="RGD"/>
</dbReference>
<dbReference type="GO" id="GO:0008233">
    <property type="term" value="F:peptidase activity"/>
    <property type="evidence" value="ECO:0000314"/>
    <property type="project" value="RGD"/>
</dbReference>
<dbReference type="GO" id="GO:0044877">
    <property type="term" value="F:protein-containing complex binding"/>
    <property type="evidence" value="ECO:0000314"/>
    <property type="project" value="RGD"/>
</dbReference>
<dbReference type="GO" id="GO:0004252">
    <property type="term" value="F:serine-type endopeptidase activity"/>
    <property type="evidence" value="ECO:0000266"/>
    <property type="project" value="RGD"/>
</dbReference>
<dbReference type="GO" id="GO:0008270">
    <property type="term" value="F:zinc ion binding"/>
    <property type="evidence" value="ECO:0007669"/>
    <property type="project" value="InterPro"/>
</dbReference>
<dbReference type="GO" id="GO:0006915">
    <property type="term" value="P:apoptotic process"/>
    <property type="evidence" value="ECO:0000266"/>
    <property type="project" value="RGD"/>
</dbReference>
<dbReference type="GO" id="GO:0016477">
    <property type="term" value="P:cell migration"/>
    <property type="evidence" value="ECO:0000266"/>
    <property type="project" value="RGD"/>
</dbReference>
<dbReference type="GO" id="GO:0071460">
    <property type="term" value="P:cellular response to cell-matrix adhesion"/>
    <property type="evidence" value="ECO:0000315"/>
    <property type="project" value="RGD"/>
</dbReference>
<dbReference type="GO" id="GO:0071345">
    <property type="term" value="P:cellular response to cytokine stimulus"/>
    <property type="evidence" value="ECO:0000270"/>
    <property type="project" value="RGD"/>
</dbReference>
<dbReference type="GO" id="GO:0071347">
    <property type="term" value="P:cellular response to interleukin-1"/>
    <property type="evidence" value="ECO:0000270"/>
    <property type="project" value="RGD"/>
</dbReference>
<dbReference type="GO" id="GO:0071283">
    <property type="term" value="P:cellular response to iron(III) ion"/>
    <property type="evidence" value="ECO:0000270"/>
    <property type="project" value="RGD"/>
</dbReference>
<dbReference type="GO" id="GO:0071222">
    <property type="term" value="P:cellular response to lipopolysaccharide"/>
    <property type="evidence" value="ECO:0000270"/>
    <property type="project" value="RGD"/>
</dbReference>
<dbReference type="GO" id="GO:0071404">
    <property type="term" value="P:cellular response to low-density lipoprotein particle stimulus"/>
    <property type="evidence" value="ECO:0000270"/>
    <property type="project" value="RGD"/>
</dbReference>
<dbReference type="GO" id="GO:0071356">
    <property type="term" value="P:cellular response to tumor necrosis factor"/>
    <property type="evidence" value="ECO:0000270"/>
    <property type="project" value="RGD"/>
</dbReference>
<dbReference type="GO" id="GO:0071492">
    <property type="term" value="P:cellular response to UV-A"/>
    <property type="evidence" value="ECO:0000266"/>
    <property type="project" value="RGD"/>
</dbReference>
<dbReference type="GO" id="GO:0030574">
    <property type="term" value="P:collagen catabolic process"/>
    <property type="evidence" value="ECO:0000314"/>
    <property type="project" value="RGD"/>
</dbReference>
<dbReference type="GO" id="GO:0007566">
    <property type="term" value="P:embryo implantation"/>
    <property type="evidence" value="ECO:0000266"/>
    <property type="project" value="RGD"/>
</dbReference>
<dbReference type="GO" id="GO:0035987">
    <property type="term" value="P:endodermal cell differentiation"/>
    <property type="evidence" value="ECO:0000266"/>
    <property type="project" value="RGD"/>
</dbReference>
<dbReference type="GO" id="GO:0030198">
    <property type="term" value="P:extracellular matrix organization"/>
    <property type="evidence" value="ECO:0000266"/>
    <property type="project" value="RGD"/>
</dbReference>
<dbReference type="GO" id="GO:0007507">
    <property type="term" value="P:heart development"/>
    <property type="evidence" value="ECO:0000314"/>
    <property type="project" value="RGD"/>
</dbReference>
<dbReference type="GO" id="GO:0001822">
    <property type="term" value="P:kidney development"/>
    <property type="evidence" value="ECO:0000270"/>
    <property type="project" value="RGD"/>
</dbReference>
<dbReference type="GO" id="GO:0048246">
    <property type="term" value="P:macrophage chemotaxis"/>
    <property type="evidence" value="ECO:0000314"/>
    <property type="project" value="RGD"/>
</dbReference>
<dbReference type="GO" id="GO:0099564">
    <property type="term" value="P:modification of synaptic structure, modulating synaptic transmission"/>
    <property type="evidence" value="ECO:0000314"/>
    <property type="project" value="SynGO"/>
</dbReference>
<dbReference type="GO" id="GO:0043066">
    <property type="term" value="P:negative regulation of apoptotic process"/>
    <property type="evidence" value="ECO:0000266"/>
    <property type="project" value="RGD"/>
</dbReference>
<dbReference type="GO" id="GO:2000697">
    <property type="term" value="P:negative regulation of epithelial cell differentiation involved in kidney development"/>
    <property type="evidence" value="ECO:0000266"/>
    <property type="project" value="RGD"/>
</dbReference>
<dbReference type="GO" id="GO:0048147">
    <property type="term" value="P:negative regulation of fibroblast proliferation"/>
    <property type="evidence" value="ECO:0000315"/>
    <property type="project" value="RGD"/>
</dbReference>
<dbReference type="GO" id="GO:2001243">
    <property type="term" value="P:negative regulation of intrinsic apoptotic signaling pathway"/>
    <property type="evidence" value="ECO:0000266"/>
    <property type="project" value="RGD"/>
</dbReference>
<dbReference type="GO" id="GO:0001503">
    <property type="term" value="P:ossification"/>
    <property type="evidence" value="ECO:0000270"/>
    <property type="project" value="RGD"/>
</dbReference>
<dbReference type="GO" id="GO:0007567">
    <property type="term" value="P:parturition"/>
    <property type="evidence" value="ECO:0000270"/>
    <property type="project" value="RGD"/>
</dbReference>
<dbReference type="GO" id="GO:0045766">
    <property type="term" value="P:positive regulation of angiogenesis"/>
    <property type="evidence" value="ECO:0000315"/>
    <property type="project" value="RGD"/>
</dbReference>
<dbReference type="GO" id="GO:0043065">
    <property type="term" value="P:positive regulation of apoptotic process"/>
    <property type="evidence" value="ECO:0000266"/>
    <property type="project" value="RGD"/>
</dbReference>
<dbReference type="GO" id="GO:0045742">
    <property type="term" value="P:positive regulation of epidermal growth factor receptor signaling pathway"/>
    <property type="evidence" value="ECO:0000266"/>
    <property type="project" value="RGD"/>
</dbReference>
<dbReference type="GO" id="GO:0051549">
    <property type="term" value="P:positive regulation of keratinocyte migration"/>
    <property type="evidence" value="ECO:0000266"/>
    <property type="project" value="RGD"/>
</dbReference>
<dbReference type="GO" id="GO:0002687">
    <property type="term" value="P:positive regulation of leukocyte migration"/>
    <property type="evidence" value="ECO:0000314"/>
    <property type="project" value="RGD"/>
</dbReference>
<dbReference type="GO" id="GO:0090200">
    <property type="term" value="P:positive regulation of release of cytochrome c from mitochondria"/>
    <property type="evidence" value="ECO:0000266"/>
    <property type="project" value="RGD"/>
</dbReference>
<dbReference type="GO" id="GO:0031915">
    <property type="term" value="P:positive regulation of synaptic plasticity"/>
    <property type="evidence" value="ECO:0000315"/>
    <property type="project" value="RGD"/>
</dbReference>
<dbReference type="GO" id="GO:1904707">
    <property type="term" value="P:positive regulation of vascular associated smooth muscle cell proliferation"/>
    <property type="evidence" value="ECO:0000266"/>
    <property type="project" value="RGD"/>
</dbReference>
<dbReference type="GO" id="GO:0030163">
    <property type="term" value="P:protein catabolic process"/>
    <property type="evidence" value="ECO:0000314"/>
    <property type="project" value="RGD"/>
</dbReference>
<dbReference type="GO" id="GO:0006508">
    <property type="term" value="P:proteolysis"/>
    <property type="evidence" value="ECO:0000314"/>
    <property type="project" value="RGD"/>
</dbReference>
<dbReference type="GO" id="GO:0150054">
    <property type="term" value="P:regulation of postsynaptic neurotransmitter receptor diffusion trapping"/>
    <property type="evidence" value="ECO:0000314"/>
    <property type="project" value="SynGO"/>
</dbReference>
<dbReference type="GO" id="GO:1904645">
    <property type="term" value="P:response to amyloid-beta"/>
    <property type="evidence" value="ECO:0000266"/>
    <property type="project" value="RGD"/>
</dbReference>
<dbReference type="GO" id="GO:0032355">
    <property type="term" value="P:response to estradiol"/>
    <property type="evidence" value="ECO:0000270"/>
    <property type="project" value="RGD"/>
</dbReference>
<dbReference type="GO" id="GO:0045471">
    <property type="term" value="P:response to ethanol"/>
    <property type="evidence" value="ECO:0000270"/>
    <property type="project" value="RGD"/>
</dbReference>
<dbReference type="GO" id="GO:0009644">
    <property type="term" value="P:response to high light intensity"/>
    <property type="evidence" value="ECO:0000270"/>
    <property type="project" value="RGD"/>
</dbReference>
<dbReference type="GO" id="GO:0055093">
    <property type="term" value="P:response to hyperoxia"/>
    <property type="evidence" value="ECO:0000270"/>
    <property type="project" value="RGD"/>
</dbReference>
<dbReference type="GO" id="GO:0001666">
    <property type="term" value="P:response to hypoxia"/>
    <property type="evidence" value="ECO:0000270"/>
    <property type="project" value="RGD"/>
</dbReference>
<dbReference type="GO" id="GO:0032496">
    <property type="term" value="P:response to lipopolysaccharide"/>
    <property type="evidence" value="ECO:0000270"/>
    <property type="project" value="RGD"/>
</dbReference>
<dbReference type="GO" id="GO:0009612">
    <property type="term" value="P:response to mechanical stimulus"/>
    <property type="evidence" value="ECO:0000270"/>
    <property type="project" value="RGD"/>
</dbReference>
<dbReference type="GO" id="GO:0035094">
    <property type="term" value="P:response to nicotine"/>
    <property type="evidence" value="ECO:0000270"/>
    <property type="project" value="RGD"/>
</dbReference>
<dbReference type="GO" id="GO:0007584">
    <property type="term" value="P:response to nutrient"/>
    <property type="evidence" value="ECO:0000270"/>
    <property type="project" value="RGD"/>
</dbReference>
<dbReference type="GO" id="GO:0006979">
    <property type="term" value="P:response to oxidative stress"/>
    <property type="evidence" value="ECO:0000314"/>
    <property type="project" value="RGD"/>
</dbReference>
<dbReference type="GO" id="GO:0032526">
    <property type="term" value="P:response to retinoic acid"/>
    <property type="evidence" value="ECO:0000270"/>
    <property type="project" value="RGD"/>
</dbReference>
<dbReference type="GO" id="GO:0034612">
    <property type="term" value="P:response to tumor necrosis factor"/>
    <property type="evidence" value="ECO:0000270"/>
    <property type="project" value="RGD"/>
</dbReference>
<dbReference type="GO" id="GO:0033189">
    <property type="term" value="P:response to vitamin A"/>
    <property type="evidence" value="ECO:0000270"/>
    <property type="project" value="RGD"/>
</dbReference>
<dbReference type="GO" id="GO:0009410">
    <property type="term" value="P:response to xenobiotic stimulus"/>
    <property type="evidence" value="ECO:0000314"/>
    <property type="project" value="RGD"/>
</dbReference>
<dbReference type="GO" id="GO:0001501">
    <property type="term" value="P:skeletal system development"/>
    <property type="evidence" value="ECO:0000266"/>
    <property type="project" value="RGD"/>
</dbReference>
<dbReference type="GO" id="GO:0048771">
    <property type="term" value="P:tissue remodeling"/>
    <property type="evidence" value="ECO:0000314"/>
    <property type="project" value="RGD"/>
</dbReference>
<dbReference type="CDD" id="cd00062">
    <property type="entry name" value="FN2"/>
    <property type="match status" value="3"/>
</dbReference>
<dbReference type="CDD" id="cd00094">
    <property type="entry name" value="HX"/>
    <property type="match status" value="1"/>
</dbReference>
<dbReference type="CDD" id="cd04278">
    <property type="entry name" value="ZnMc_MMP"/>
    <property type="match status" value="1"/>
</dbReference>
<dbReference type="FunFam" id="3.40.390.10:FF:000010">
    <property type="entry name" value="72 kDa type IV collagenase"/>
    <property type="match status" value="1"/>
</dbReference>
<dbReference type="FunFam" id="2.10.10.10:FF:000001">
    <property type="entry name" value="Fibronectin 1a isoform 1"/>
    <property type="match status" value="3"/>
</dbReference>
<dbReference type="FunFam" id="2.110.10.10:FF:000011">
    <property type="entry name" value="Matrix metalloproteinase-9"/>
    <property type="match status" value="1"/>
</dbReference>
<dbReference type="Gene3D" id="3.40.390.10">
    <property type="entry name" value="Collagenase (Catalytic Domain)"/>
    <property type="match status" value="1"/>
</dbReference>
<dbReference type="Gene3D" id="2.10.10.10">
    <property type="entry name" value="Fibronectin, type II, collagen-binding"/>
    <property type="match status" value="3"/>
</dbReference>
<dbReference type="Gene3D" id="2.110.10.10">
    <property type="entry name" value="Hemopexin-like domain"/>
    <property type="match status" value="1"/>
</dbReference>
<dbReference type="InterPro" id="IPR000562">
    <property type="entry name" value="FN_type2_dom"/>
</dbReference>
<dbReference type="InterPro" id="IPR036943">
    <property type="entry name" value="FN_type2_sf"/>
</dbReference>
<dbReference type="InterPro" id="IPR000585">
    <property type="entry name" value="Hemopexin-like_dom"/>
</dbReference>
<dbReference type="InterPro" id="IPR036375">
    <property type="entry name" value="Hemopexin-like_dom_sf"/>
</dbReference>
<dbReference type="InterPro" id="IPR018487">
    <property type="entry name" value="Hemopexin-like_repeat"/>
</dbReference>
<dbReference type="InterPro" id="IPR018486">
    <property type="entry name" value="Hemopexin_CS"/>
</dbReference>
<dbReference type="InterPro" id="IPR013806">
    <property type="entry name" value="Kringle-like"/>
</dbReference>
<dbReference type="InterPro" id="IPR033739">
    <property type="entry name" value="M10A_MMP"/>
</dbReference>
<dbReference type="InterPro" id="IPR024079">
    <property type="entry name" value="MetalloPept_cat_dom_sf"/>
</dbReference>
<dbReference type="InterPro" id="IPR001818">
    <property type="entry name" value="Pept_M10_metallopeptidase"/>
</dbReference>
<dbReference type="InterPro" id="IPR021190">
    <property type="entry name" value="Pept_M10A"/>
</dbReference>
<dbReference type="InterPro" id="IPR021158">
    <property type="entry name" value="Pept_M10A_Zn_BS"/>
</dbReference>
<dbReference type="InterPro" id="IPR006026">
    <property type="entry name" value="Peptidase_Metallo"/>
</dbReference>
<dbReference type="InterPro" id="IPR036365">
    <property type="entry name" value="PGBD-like_sf"/>
</dbReference>
<dbReference type="InterPro" id="IPR006970">
    <property type="entry name" value="PT"/>
</dbReference>
<dbReference type="PANTHER" id="PTHR10201">
    <property type="entry name" value="MATRIX METALLOPROTEINASE"/>
    <property type="match status" value="1"/>
</dbReference>
<dbReference type="PANTHER" id="PTHR10201:SF30">
    <property type="entry name" value="MATRIX METALLOPROTEINASE-9"/>
    <property type="match status" value="1"/>
</dbReference>
<dbReference type="Pfam" id="PF00040">
    <property type="entry name" value="fn2"/>
    <property type="match status" value="3"/>
</dbReference>
<dbReference type="Pfam" id="PF00045">
    <property type="entry name" value="Hemopexin"/>
    <property type="match status" value="1"/>
</dbReference>
<dbReference type="Pfam" id="PF00413">
    <property type="entry name" value="Peptidase_M10"/>
    <property type="match status" value="2"/>
</dbReference>
<dbReference type="Pfam" id="PF04886">
    <property type="entry name" value="PT"/>
    <property type="match status" value="1"/>
</dbReference>
<dbReference type="PIRSF" id="PIRSF001191">
    <property type="entry name" value="Peptidase_M10A_matrix"/>
    <property type="match status" value="1"/>
</dbReference>
<dbReference type="PRINTS" id="PR00013">
    <property type="entry name" value="FNTYPEII"/>
</dbReference>
<dbReference type="PRINTS" id="PR00138">
    <property type="entry name" value="MATRIXIN"/>
</dbReference>
<dbReference type="SMART" id="SM00059">
    <property type="entry name" value="FN2"/>
    <property type="match status" value="3"/>
</dbReference>
<dbReference type="SMART" id="SM00120">
    <property type="entry name" value="HX"/>
    <property type="match status" value="4"/>
</dbReference>
<dbReference type="SMART" id="SM00235">
    <property type="entry name" value="ZnMc"/>
    <property type="match status" value="1"/>
</dbReference>
<dbReference type="SUPFAM" id="SSF50923">
    <property type="entry name" value="Hemopexin-like domain"/>
    <property type="match status" value="1"/>
</dbReference>
<dbReference type="SUPFAM" id="SSF57440">
    <property type="entry name" value="Kringle-like"/>
    <property type="match status" value="3"/>
</dbReference>
<dbReference type="SUPFAM" id="SSF55486">
    <property type="entry name" value="Metalloproteases ('zincins'), catalytic domain"/>
    <property type="match status" value="1"/>
</dbReference>
<dbReference type="SUPFAM" id="SSF47090">
    <property type="entry name" value="PGBD-like"/>
    <property type="match status" value="1"/>
</dbReference>
<dbReference type="PROSITE" id="PS00546">
    <property type="entry name" value="CYSTEINE_SWITCH"/>
    <property type="match status" value="1"/>
</dbReference>
<dbReference type="PROSITE" id="PS00023">
    <property type="entry name" value="FN2_1"/>
    <property type="match status" value="2"/>
</dbReference>
<dbReference type="PROSITE" id="PS51092">
    <property type="entry name" value="FN2_2"/>
    <property type="match status" value="3"/>
</dbReference>
<dbReference type="PROSITE" id="PS00024">
    <property type="entry name" value="HEMOPEXIN"/>
    <property type="match status" value="1"/>
</dbReference>
<dbReference type="PROSITE" id="PS51642">
    <property type="entry name" value="HEMOPEXIN_2"/>
    <property type="match status" value="4"/>
</dbReference>
<dbReference type="PROSITE" id="PS00142">
    <property type="entry name" value="ZINC_PROTEASE"/>
    <property type="match status" value="1"/>
</dbReference>
<name>MMP9_RAT</name>
<evidence type="ECO:0000250" key="1">
    <source>
        <dbReference type="UniProtKB" id="P14780"/>
    </source>
</evidence>
<evidence type="ECO:0000250" key="2">
    <source>
        <dbReference type="UniProtKB" id="P41245"/>
    </source>
</evidence>
<evidence type="ECO:0000255" key="3"/>
<evidence type="ECO:0000255" key="4">
    <source>
        <dbReference type="PROSITE-ProRule" id="PRU00479"/>
    </source>
</evidence>
<evidence type="ECO:0000255" key="5">
    <source>
        <dbReference type="PROSITE-ProRule" id="PRU10095"/>
    </source>
</evidence>
<evidence type="ECO:0000256" key="6">
    <source>
        <dbReference type="SAM" id="MobiDB-lite"/>
    </source>
</evidence>
<evidence type="ECO:0000305" key="7"/>
<organism>
    <name type="scientific">Rattus norvegicus</name>
    <name type="common">Rat</name>
    <dbReference type="NCBI Taxonomy" id="10116"/>
    <lineage>
        <taxon>Eukaryota</taxon>
        <taxon>Metazoa</taxon>
        <taxon>Chordata</taxon>
        <taxon>Craniata</taxon>
        <taxon>Vertebrata</taxon>
        <taxon>Euteleostomi</taxon>
        <taxon>Mammalia</taxon>
        <taxon>Eutheria</taxon>
        <taxon>Euarchontoglires</taxon>
        <taxon>Glires</taxon>
        <taxon>Rodentia</taxon>
        <taxon>Myomorpha</taxon>
        <taxon>Muroidea</taxon>
        <taxon>Muridae</taxon>
        <taxon>Murinae</taxon>
        <taxon>Rattus</taxon>
    </lineage>
</organism>
<protein>
    <recommendedName>
        <fullName>Matrix metalloproteinase-9</fullName>
        <shortName>MMP-9</shortName>
        <ecNumber evidence="1">3.4.24.35</ecNumber>
    </recommendedName>
    <alternativeName>
        <fullName>92 kDa gelatinase</fullName>
    </alternativeName>
    <alternativeName>
        <fullName>92 kDa type IV collagenase</fullName>
    </alternativeName>
    <alternativeName>
        <fullName>Gelatinase B</fullName>
        <shortName>GELB</shortName>
    </alternativeName>
</protein>
<gene>
    <name type="primary">Mmp9</name>
</gene>
<sequence>MSPWQPLLLVLLALGYSFAAPHQRQPTYVVFPRDLKTSNLTDTQLAEDYLYRYGYTRAAQMMGEKQSLRPALLMLQKQLSLPQTGELDSETLKAIRSPRCGVPDVGKFQTFDGDLKWHHHNITYWIQSYTEDLPRDVIDDSFARAFAVWSAVTPLTFTRVYGLEADIVIQFGVAEHGDGYPFDGKDGLLAHAFPPGPGIQGDAHFDDDELWSLGKGAVVPTYFGNANGAPCHFPFTFEGRSYLSCTTDGRNDGKPWCGTTADYDTDRKYGFCPSENLYTEHGNGDGKPCVFPFIFEGHSYSACTTKGRSDGYRWCATTANYDQDKADGFCPTRADVTVTGGNSAGEMCVFPFVFLGKQYSTCTSEGRSDGRLWCATTSNFDADKKWGFCPDQGYSLFLVAAHEFGHALGLDHSSVPEALMYPMYHYHEDSPLHEDDIKGIHHLYGRGSKPDPRPPATTAAEPQPTAPPTMCSTAPPMAYPTGGPTVAPTGAPSPGPTGPPTAGPSEAPTESSTPDDNPCNVDVFDAIADIQGALHFFKDGRYWKFSNHGGNQLQGPFLIARTWPAFPSKLNSAFEDPQPKKIFFFLWAQMWVYTGQSVLGPRSLDKLGLGSEVTLVTGLLPRRGGKALLISRERIWKFDLKSQKVDPQSVTRLDNEFSGVPWNSHNVFQYQDKAYFCHDKYFWRVSFHNRVNQVDHVAYVTYDLLQCP</sequence>
<comment type="function">
    <text evidence="1 2">Matrix metalloproteinase that plays an essential role in local proteolysis of the extracellular matrix and in leukocyte migration (By similarity). Could play a role in bone osteoclastic resorption (By similarity). Cleaves KiSS1 at a Gly-|-Leu bond (By similarity). Cleaves NINJ1 to generate the Secreted ninjurin-1 form (By similarity). Cleaves type IV and type V collagen into large C-terminal three quarter fragments and shorter N-terminal one quarter fragments. Degrades fibronectin but not laminin or Pz-peptide (By similarity).</text>
</comment>
<comment type="catalytic activity">
    <reaction evidence="1">
        <text>Cleavage of gelatin types I and V and collagen types IV and V.</text>
        <dbReference type="EC" id="3.4.24.35"/>
    </reaction>
</comment>
<comment type="cofactor">
    <cofactor evidence="1">
        <name>Zn(2+)</name>
        <dbReference type="ChEBI" id="CHEBI:29105"/>
    </cofactor>
    <text evidence="1">Binds 2 Zn(2+) ions per subunit.</text>
</comment>
<comment type="cofactor">
    <cofactor evidence="1">
        <name>Ca(2+)</name>
        <dbReference type="ChEBI" id="CHEBI:29108"/>
    </cofactor>
    <text evidence="1">Binds 3 Ca(2+) ions per subunit.</text>
</comment>
<comment type="subunit">
    <text evidence="1">Exists as monomer or homodimer; disulfide-linked. Also exists as heterodimer with LCN2. Macrophages and transformed cell lines produce only the monomeric form. Interacts with ECM1.</text>
</comment>
<comment type="subcellular location">
    <subcellularLocation>
        <location evidence="1">Secreted</location>
        <location evidence="1">Extracellular space</location>
        <location evidence="1">Extracellular matrix</location>
    </subcellularLocation>
</comment>
<comment type="domain">
    <text evidence="1">The conserved cysteine present in the cysteine-switch motif binds the catalytic zinc ion, thus inhibiting the enzyme. The dissociation of the cysteine from the zinc ion upon the activation-peptide release activates the enzyme.</text>
</comment>
<comment type="PTM">
    <text evidence="1">N- and O-glycosylated.</text>
</comment>
<comment type="similarity">
    <text evidence="7">Belongs to the peptidase M10A family.</text>
</comment>
<proteinExistence type="evidence at transcript level"/>
<feature type="signal peptide" evidence="1">
    <location>
        <begin position="1"/>
        <end position="19"/>
    </location>
</feature>
<feature type="propeptide" id="PRO_0000028762" description="Activation peptide" evidence="1">
    <location>
        <begin position="20"/>
        <end position="107"/>
    </location>
</feature>
<feature type="chain" id="PRO_0000028763" description="Matrix metalloproteinase-9">
    <location>
        <begin position="108"/>
        <end position="708"/>
    </location>
</feature>
<feature type="domain" description="Fibronectin type-II 1" evidence="4">
    <location>
        <begin position="226"/>
        <end position="274"/>
    </location>
</feature>
<feature type="domain" description="Fibronectin type-II 2" evidence="4">
    <location>
        <begin position="284"/>
        <end position="332"/>
    </location>
</feature>
<feature type="domain" description="Fibronectin type-II 3" evidence="4">
    <location>
        <begin position="343"/>
        <end position="391"/>
    </location>
</feature>
<feature type="repeat" description="Hemopexin 1">
    <location>
        <begin position="521"/>
        <end position="566"/>
    </location>
</feature>
<feature type="repeat" description="Hemopexin 2">
    <location>
        <begin position="567"/>
        <end position="611"/>
    </location>
</feature>
<feature type="repeat" description="Hemopexin 3">
    <location>
        <begin position="613"/>
        <end position="660"/>
    </location>
</feature>
<feature type="repeat" description="Hemopexin 4">
    <location>
        <begin position="661"/>
        <end position="707"/>
    </location>
</feature>
<feature type="region of interest" description="Disordered" evidence="6">
    <location>
        <begin position="441"/>
        <end position="520"/>
    </location>
</feature>
<feature type="short sequence motif" description="Cysteine switch" evidence="1">
    <location>
        <begin position="98"/>
        <end position="105"/>
    </location>
</feature>
<feature type="compositionally biased region" description="Low complexity" evidence="6">
    <location>
        <begin position="480"/>
        <end position="490"/>
    </location>
</feature>
<feature type="compositionally biased region" description="Pro residues" evidence="6">
    <location>
        <begin position="491"/>
        <end position="502"/>
    </location>
</feature>
<feature type="active site" evidence="5">
    <location>
        <position position="403"/>
    </location>
</feature>
<feature type="binding site" description="in inhibited form" evidence="1">
    <location>
        <position position="100"/>
    </location>
    <ligand>
        <name>Zn(2+)</name>
        <dbReference type="ChEBI" id="CHEBI:29105"/>
        <label>2</label>
        <note>catalytic</note>
    </ligand>
</feature>
<feature type="binding site" evidence="1">
    <location>
        <position position="132"/>
    </location>
    <ligand>
        <name>Ca(2+)</name>
        <dbReference type="ChEBI" id="CHEBI:29108"/>
        <label>1</label>
    </ligand>
</feature>
<feature type="binding site" evidence="1">
    <location>
        <position position="166"/>
    </location>
    <ligand>
        <name>Ca(2+)</name>
        <dbReference type="ChEBI" id="CHEBI:29108"/>
        <label>2</label>
    </ligand>
</feature>
<feature type="binding site" evidence="1">
    <location>
        <position position="176"/>
    </location>
    <ligand>
        <name>Zn(2+)</name>
        <dbReference type="ChEBI" id="CHEBI:29105"/>
        <label>1</label>
        <note>structural</note>
    </ligand>
</feature>
<feature type="binding site" evidence="1">
    <location>
        <position position="178"/>
    </location>
    <ligand>
        <name>Zn(2+)</name>
        <dbReference type="ChEBI" id="CHEBI:29105"/>
        <label>1</label>
        <note>structural</note>
    </ligand>
</feature>
<feature type="binding site" evidence="1">
    <location>
        <position position="183"/>
    </location>
    <ligand>
        <name>Ca(2+)</name>
        <dbReference type="ChEBI" id="CHEBI:29108"/>
        <label>3</label>
    </ligand>
</feature>
<feature type="binding site" evidence="1">
    <location>
        <position position="184"/>
    </location>
    <ligand>
        <name>Ca(2+)</name>
        <dbReference type="ChEBI" id="CHEBI:29108"/>
        <label>3</label>
    </ligand>
</feature>
<feature type="binding site" evidence="1">
    <location>
        <position position="186"/>
    </location>
    <ligand>
        <name>Ca(2+)</name>
        <dbReference type="ChEBI" id="CHEBI:29108"/>
        <label>3</label>
    </ligand>
</feature>
<feature type="binding site" evidence="1">
    <location>
        <position position="188"/>
    </location>
    <ligand>
        <name>Ca(2+)</name>
        <dbReference type="ChEBI" id="CHEBI:29108"/>
        <label>3</label>
    </ligand>
</feature>
<feature type="binding site" evidence="1">
    <location>
        <position position="191"/>
    </location>
    <ligand>
        <name>Zn(2+)</name>
        <dbReference type="ChEBI" id="CHEBI:29105"/>
        <label>1</label>
        <note>structural</note>
    </ligand>
</feature>
<feature type="binding site" evidence="1">
    <location>
        <position position="198"/>
    </location>
    <ligand>
        <name>Ca(2+)</name>
        <dbReference type="ChEBI" id="CHEBI:29108"/>
        <label>2</label>
    </ligand>
</feature>
<feature type="binding site" evidence="1">
    <location>
        <position position="200"/>
    </location>
    <ligand>
        <name>Ca(2+)</name>
        <dbReference type="ChEBI" id="CHEBI:29108"/>
        <label>2</label>
    </ligand>
</feature>
<feature type="binding site" evidence="1">
    <location>
        <position position="202"/>
    </location>
    <ligand>
        <name>Ca(2+)</name>
        <dbReference type="ChEBI" id="CHEBI:29108"/>
        <label>2</label>
    </ligand>
</feature>
<feature type="binding site" evidence="1">
    <location>
        <position position="204"/>
    </location>
    <ligand>
        <name>Zn(2+)</name>
        <dbReference type="ChEBI" id="CHEBI:29105"/>
        <label>1</label>
        <note>structural</note>
    </ligand>
</feature>
<feature type="binding site" evidence="1">
    <location>
        <position position="206"/>
    </location>
    <ligand>
        <name>Ca(2+)</name>
        <dbReference type="ChEBI" id="CHEBI:29108"/>
        <label>3</label>
    </ligand>
</feature>
<feature type="binding site" evidence="1">
    <location>
        <position position="207"/>
    </location>
    <ligand>
        <name>Ca(2+)</name>
        <dbReference type="ChEBI" id="CHEBI:29108"/>
        <label>1</label>
    </ligand>
</feature>
<feature type="binding site" evidence="1">
    <location>
        <position position="209"/>
    </location>
    <ligand>
        <name>Ca(2+)</name>
        <dbReference type="ChEBI" id="CHEBI:29108"/>
        <label>1</label>
    </ligand>
</feature>
<feature type="binding site" evidence="1">
    <location>
        <position position="209"/>
    </location>
    <ligand>
        <name>Ca(2+)</name>
        <dbReference type="ChEBI" id="CHEBI:29108"/>
        <label>3</label>
    </ligand>
</feature>
<feature type="binding site" evidence="1">
    <location>
        <position position="402"/>
    </location>
    <ligand>
        <name>Zn(2+)</name>
        <dbReference type="ChEBI" id="CHEBI:29105"/>
        <label>2</label>
        <note>catalytic</note>
    </ligand>
</feature>
<feature type="binding site" evidence="1">
    <location>
        <position position="406"/>
    </location>
    <ligand>
        <name>Zn(2+)</name>
        <dbReference type="ChEBI" id="CHEBI:29105"/>
        <label>2</label>
        <note>catalytic</note>
    </ligand>
</feature>
<feature type="binding site" evidence="1">
    <location>
        <position position="412"/>
    </location>
    <ligand>
        <name>Zn(2+)</name>
        <dbReference type="ChEBI" id="CHEBI:29105"/>
        <label>2</label>
        <note>catalytic</note>
    </ligand>
</feature>
<feature type="glycosylation site" description="N-linked (GlcNAc...) asparagine" evidence="3">
    <location>
        <position position="39"/>
    </location>
</feature>
<feature type="glycosylation site" description="N-linked (GlcNAc...) asparagine" evidence="3">
    <location>
        <position position="121"/>
    </location>
</feature>
<feature type="disulfide bond" evidence="4">
    <location>
        <begin position="231"/>
        <end position="257"/>
    </location>
</feature>
<feature type="disulfide bond" evidence="4">
    <location>
        <begin position="245"/>
        <end position="272"/>
    </location>
</feature>
<feature type="disulfide bond" evidence="4">
    <location>
        <begin position="289"/>
        <end position="315"/>
    </location>
</feature>
<feature type="disulfide bond" evidence="4">
    <location>
        <begin position="303"/>
        <end position="330"/>
    </location>
</feature>
<feature type="disulfide bond" evidence="4">
    <location>
        <begin position="348"/>
        <end position="374"/>
    </location>
</feature>
<feature type="disulfide bond" evidence="4">
    <location>
        <begin position="362"/>
        <end position="389"/>
    </location>
</feature>
<feature type="disulfide bond" evidence="4">
    <location>
        <begin position="519"/>
        <end position="707"/>
    </location>
</feature>
<feature type="sequence conflict" description="In Ref. 1; AAA90911." evidence="7" ref="1">
    <original>S</original>
    <variation>N</variation>
    <location>
        <position position="2"/>
    </location>
</feature>
<feature type="sequence conflict" description="In Ref. 1; AAA90911." evidence="7" ref="1">
    <original>D</original>
    <variation>E</variation>
    <location>
        <position position="112"/>
    </location>
</feature>
<feature type="sequence conflict" description="In Ref. 1; AAA90911." evidence="7" ref="1">
    <original>AD</original>
    <variation>LY</variation>
    <location>
        <begin position="326"/>
        <end position="327"/>
    </location>
</feature>
<feature type="sequence conflict" description="In Ref. 1; AAA90911." evidence="7" ref="1">
    <original>S</original>
    <variation>G</variation>
    <location>
        <position position="364"/>
    </location>
</feature>
<feature type="sequence conflict" description="In Ref. 1; AAA90911." evidence="7" ref="1">
    <original>H</original>
    <variation>Q</variation>
    <location>
        <position position="441"/>
    </location>
</feature>
<feature type="sequence conflict" description="In Ref. 1; AAA90911." evidence="7" ref="1">
    <original>S</original>
    <variation>P</variation>
    <location>
        <position position="472"/>
    </location>
</feature>
<feature type="sequence conflict" description="In Ref. 1; AAA90911." evidence="7" ref="1">
    <original>D</original>
    <variation>V</variation>
    <location>
        <position position="515"/>
    </location>
</feature>
<feature type="sequence conflict" description="In Ref. 1; AAA90911." evidence="7" ref="1">
    <original>N</original>
    <variation>S</variation>
    <location>
        <position position="551"/>
    </location>
</feature>
<feature type="sequence conflict" description="In Ref. 1; AAA90911." evidence="7" ref="1">
    <original>F</original>
    <variation>L</variation>
    <location>
        <position position="566"/>
    </location>
</feature>
<feature type="sequence conflict" description="In Ref. 1; AAA90911." evidence="7" ref="1">
    <original>S</original>
    <variation>A</variation>
    <location>
        <position position="568"/>
    </location>
</feature>
<feature type="sequence conflict" description="In Ref. 1; AAA90911." evidence="7" ref="1">
    <original>P</original>
    <variation>S</variation>
    <location>
        <position position="579"/>
    </location>
</feature>
<feature type="sequence conflict" description="In Ref. 1; AAA90911." evidence="7" ref="1">
    <original>LWAQ</original>
    <variation>SGRK</variation>
    <location>
        <begin position="586"/>
        <end position="589"/>
    </location>
</feature>
<feature type="sequence conflict" description="In Ref. 1; AAA90911." evidence="7" ref="1">
    <original>S</original>
    <variation>T</variation>
    <location>
        <position position="597"/>
    </location>
</feature>
<feature type="sequence conflict" description="In Ref. 1; AAA90911." evidence="7" ref="1">
    <original>Q</original>
    <variation>H</variation>
    <location>
        <position position="669"/>
    </location>
</feature>
<reference key="1">
    <citation type="journal article" date="1995" name="Gene">
        <title>The cDNA cloning and expression of the gene encoding rat gelatinase B.</title>
        <authorList>
            <person name="Okada A."/>
            <person name="Santavicca M."/>
            <person name="Basset P."/>
        </authorList>
    </citation>
    <scope>NUCLEOTIDE SEQUENCE [MRNA]</scope>
    <source>
        <strain>Wistar</strain>
    </source>
</reference>
<reference key="2">
    <citation type="journal article" date="1996" name="FEBS Lett.">
        <title>Cloning of rat 92-kDa type IV collagenase and expression of an active recombinant catalytic domain.</title>
        <authorList>
            <person name="Xia Y."/>
            <person name="Garcia G."/>
            <person name="Chen S."/>
            <person name="Wilson C.B."/>
            <person name="Feng L."/>
        </authorList>
    </citation>
    <scope>NUCLEOTIDE SEQUENCE [MRNA]</scope>
    <source>
        <strain>Fischer 344</strain>
    </source>
</reference>